<proteinExistence type="inferred from homology"/>
<evidence type="ECO:0000255" key="1">
    <source>
        <dbReference type="HAMAP-Rule" id="MF_00188"/>
    </source>
</evidence>
<protein>
    <recommendedName>
        <fullName evidence="1">Protease HtpX homolog</fullName>
        <ecNumber evidence="1">3.4.24.-</ecNumber>
    </recommendedName>
</protein>
<organism>
    <name type="scientific">Streptococcus pneumoniae (strain Taiwan19F-14)</name>
    <dbReference type="NCBI Taxonomy" id="487213"/>
    <lineage>
        <taxon>Bacteria</taxon>
        <taxon>Bacillati</taxon>
        <taxon>Bacillota</taxon>
        <taxon>Bacilli</taxon>
        <taxon>Lactobacillales</taxon>
        <taxon>Streptococcaceae</taxon>
        <taxon>Streptococcus</taxon>
    </lineage>
</organism>
<sequence length="299" mass="32810">MLFDQIASNKRKTWILLLVFFLLLALVGYAVGYLFIRSGLGGLVIALIIGFIYALSMIFQSTEIVMSMNGAREVDEQTAPDLYHVVEDMALVAQIPMPRIFIIDDPALNAFATGSNPQNAAVAATSGLLAIMNREELEAVMGHEVSHIRNYDIRISTIAVALASAITMLSSMAGRMMWWGGAGRRRSDDDRDGNGLEIIMLVVSLLAIVLAPLAATLVQLAISRQREFLADASSVELTRNPQGMINALDKLDNSKPMSRHVDDASSALYINDPKKGGGFQKLFYTHPPISERIERLKQM</sequence>
<feature type="chain" id="PRO_1000192750" description="Protease HtpX homolog">
    <location>
        <begin position="1"/>
        <end position="299"/>
    </location>
</feature>
<feature type="transmembrane region" description="Helical" evidence="1">
    <location>
        <begin position="15"/>
        <end position="35"/>
    </location>
</feature>
<feature type="transmembrane region" description="Helical" evidence="1">
    <location>
        <begin position="39"/>
        <end position="59"/>
    </location>
</feature>
<feature type="transmembrane region" description="Helical" evidence="1">
    <location>
        <begin position="158"/>
        <end position="178"/>
    </location>
</feature>
<feature type="transmembrane region" description="Helical" evidence="1">
    <location>
        <begin position="198"/>
        <end position="218"/>
    </location>
</feature>
<feature type="active site" evidence="1">
    <location>
        <position position="144"/>
    </location>
</feature>
<feature type="binding site" evidence="1">
    <location>
        <position position="143"/>
    </location>
    <ligand>
        <name>Zn(2+)</name>
        <dbReference type="ChEBI" id="CHEBI:29105"/>
        <note>catalytic</note>
    </ligand>
</feature>
<feature type="binding site" evidence="1">
    <location>
        <position position="147"/>
    </location>
    <ligand>
        <name>Zn(2+)</name>
        <dbReference type="ChEBI" id="CHEBI:29105"/>
        <note>catalytic</note>
    </ligand>
</feature>
<feature type="binding site" evidence="1">
    <location>
        <position position="227"/>
    </location>
    <ligand>
        <name>Zn(2+)</name>
        <dbReference type="ChEBI" id="CHEBI:29105"/>
        <note>catalytic</note>
    </ligand>
</feature>
<dbReference type="EC" id="3.4.24.-" evidence="1"/>
<dbReference type="EMBL" id="CP000921">
    <property type="protein sequence ID" value="ACO24158.1"/>
    <property type="molecule type" value="Genomic_DNA"/>
</dbReference>
<dbReference type="RefSeq" id="WP_000895725.1">
    <property type="nucleotide sequence ID" value="NC_012469.1"/>
</dbReference>
<dbReference type="KEGG" id="snt:SPT_0944"/>
<dbReference type="HOGENOM" id="CLU_042266_2_1_9"/>
<dbReference type="GO" id="GO:0005886">
    <property type="term" value="C:plasma membrane"/>
    <property type="evidence" value="ECO:0007669"/>
    <property type="project" value="UniProtKB-SubCell"/>
</dbReference>
<dbReference type="GO" id="GO:0004222">
    <property type="term" value="F:metalloendopeptidase activity"/>
    <property type="evidence" value="ECO:0007669"/>
    <property type="project" value="UniProtKB-UniRule"/>
</dbReference>
<dbReference type="GO" id="GO:0008270">
    <property type="term" value="F:zinc ion binding"/>
    <property type="evidence" value="ECO:0007669"/>
    <property type="project" value="UniProtKB-UniRule"/>
</dbReference>
<dbReference type="GO" id="GO:0006508">
    <property type="term" value="P:proteolysis"/>
    <property type="evidence" value="ECO:0007669"/>
    <property type="project" value="UniProtKB-KW"/>
</dbReference>
<dbReference type="CDD" id="cd07340">
    <property type="entry name" value="M48B_Htpx_like"/>
    <property type="match status" value="1"/>
</dbReference>
<dbReference type="Gene3D" id="3.30.2010.10">
    <property type="entry name" value="Metalloproteases ('zincins'), catalytic domain"/>
    <property type="match status" value="1"/>
</dbReference>
<dbReference type="HAMAP" id="MF_00188">
    <property type="entry name" value="Pept_M48_protease_HtpX"/>
    <property type="match status" value="1"/>
</dbReference>
<dbReference type="InterPro" id="IPR050083">
    <property type="entry name" value="HtpX_protease"/>
</dbReference>
<dbReference type="InterPro" id="IPR022919">
    <property type="entry name" value="Pept_M48_protease_HtpX"/>
</dbReference>
<dbReference type="InterPro" id="IPR001915">
    <property type="entry name" value="Peptidase_M48"/>
</dbReference>
<dbReference type="NCBIfam" id="NF003425">
    <property type="entry name" value="PRK04897.1"/>
    <property type="match status" value="1"/>
</dbReference>
<dbReference type="PANTHER" id="PTHR43221">
    <property type="entry name" value="PROTEASE HTPX"/>
    <property type="match status" value="1"/>
</dbReference>
<dbReference type="PANTHER" id="PTHR43221:SF1">
    <property type="entry name" value="PROTEASE HTPX"/>
    <property type="match status" value="1"/>
</dbReference>
<dbReference type="Pfam" id="PF01435">
    <property type="entry name" value="Peptidase_M48"/>
    <property type="match status" value="1"/>
</dbReference>
<gene>
    <name evidence="1" type="primary">htpX</name>
    <name type="ordered locus">SPT_0944</name>
</gene>
<reference key="1">
    <citation type="journal article" date="2010" name="Genome Biol.">
        <title>Structure and dynamics of the pan-genome of Streptococcus pneumoniae and closely related species.</title>
        <authorList>
            <person name="Donati C."/>
            <person name="Hiller N.L."/>
            <person name="Tettelin H."/>
            <person name="Muzzi A."/>
            <person name="Croucher N.J."/>
            <person name="Angiuoli S.V."/>
            <person name="Oggioni M."/>
            <person name="Dunning Hotopp J.C."/>
            <person name="Hu F.Z."/>
            <person name="Riley D.R."/>
            <person name="Covacci A."/>
            <person name="Mitchell T.J."/>
            <person name="Bentley S.D."/>
            <person name="Kilian M."/>
            <person name="Ehrlich G.D."/>
            <person name="Rappuoli R."/>
            <person name="Moxon E.R."/>
            <person name="Masignani V."/>
        </authorList>
    </citation>
    <scope>NUCLEOTIDE SEQUENCE [LARGE SCALE GENOMIC DNA]</scope>
    <source>
        <strain>Taiwan19F-14</strain>
    </source>
</reference>
<name>HTPX_STRZT</name>
<keyword id="KW-1003">Cell membrane</keyword>
<keyword id="KW-0378">Hydrolase</keyword>
<keyword id="KW-0472">Membrane</keyword>
<keyword id="KW-0479">Metal-binding</keyword>
<keyword id="KW-0482">Metalloprotease</keyword>
<keyword id="KW-0645">Protease</keyword>
<keyword id="KW-0812">Transmembrane</keyword>
<keyword id="KW-1133">Transmembrane helix</keyword>
<keyword id="KW-0862">Zinc</keyword>
<comment type="cofactor">
    <cofactor evidence="1">
        <name>Zn(2+)</name>
        <dbReference type="ChEBI" id="CHEBI:29105"/>
    </cofactor>
    <text evidence="1">Binds 1 zinc ion per subunit.</text>
</comment>
<comment type="subcellular location">
    <subcellularLocation>
        <location evidence="1">Cell membrane</location>
        <topology evidence="1">Multi-pass membrane protein</topology>
    </subcellularLocation>
</comment>
<comment type="similarity">
    <text evidence="1">Belongs to the peptidase M48B family.</text>
</comment>
<accession>C1CR23</accession>